<gene>
    <name type="primary">TRMT13</name>
    <name type="synonym">CCDC76</name>
</gene>
<name>TRM13_HUMAN</name>
<accession>Q9NUP7</accession>
<accession>Q5VVL0</accession>
<accession>Q9NW65</accession>
<feature type="initiator methionine" description="Removed" evidence="7 8 9">
    <location>
        <position position="1"/>
    </location>
</feature>
<feature type="chain" id="PRO_0000236678" description="tRNA:m(4)X modification enzyme TRM13 homolog">
    <location>
        <begin position="2"/>
        <end position="481"/>
    </location>
</feature>
<feature type="zinc finger region" description="CHHC U11-48K-type" evidence="3">
    <location>
        <begin position="56"/>
        <end position="83"/>
    </location>
</feature>
<feature type="region of interest" description="Disordered" evidence="4">
    <location>
        <begin position="381"/>
        <end position="408"/>
    </location>
</feature>
<feature type="coiled-coil region" evidence="2">
    <location>
        <begin position="113"/>
        <end position="140"/>
    </location>
</feature>
<feature type="binding site" evidence="3">
    <location>
        <position position="59"/>
    </location>
    <ligand>
        <name>Zn(2+)</name>
        <dbReference type="ChEBI" id="CHEBI:29105"/>
    </ligand>
</feature>
<feature type="binding site" evidence="3">
    <location>
        <position position="65"/>
    </location>
    <ligand>
        <name>Zn(2+)</name>
        <dbReference type="ChEBI" id="CHEBI:29105"/>
    </ligand>
</feature>
<feature type="binding site" evidence="3">
    <location>
        <position position="75"/>
    </location>
    <ligand>
        <name>Zn(2+)</name>
        <dbReference type="ChEBI" id="CHEBI:29105"/>
    </ligand>
</feature>
<feature type="binding site" evidence="3">
    <location>
        <position position="79"/>
    </location>
    <ligand>
        <name>Zn(2+)</name>
        <dbReference type="ChEBI" id="CHEBI:29105"/>
    </ligand>
</feature>
<feature type="modified residue" description="N-acetylalanine" evidence="7 8 9">
    <location>
        <position position="2"/>
    </location>
</feature>
<feature type="splice variant" id="VSP_018578" description="In isoform 2." evidence="5">
    <original>ASILGNIE</original>
    <variation>VCLGYSNY</variation>
    <location>
        <begin position="168"/>
        <end position="175"/>
    </location>
</feature>
<feature type="splice variant" id="VSP_018579" description="In isoform 2." evidence="5">
    <location>
        <begin position="176"/>
        <end position="481"/>
    </location>
</feature>
<feature type="sequence variant" id="VAR_057806" description="In dbSNP:rs687513.">
    <original>A</original>
    <variation>V</variation>
    <location>
        <position position="48"/>
    </location>
</feature>
<feature type="sequence conflict" description="In Ref. 1; BAA92074 and 3; AAH75811." evidence="6" ref="1 3">
    <original>A</original>
    <variation>M</variation>
    <location>
        <position position="48"/>
    </location>
</feature>
<comment type="function">
    <text evidence="1">tRNA methylase which 2'-O-methylates cytidine(4) in tRNA(Pro) and tRNA(Gly)(GCC), and adenosine(4) in tRNA(His).</text>
</comment>
<comment type="catalytic activity">
    <reaction evidence="1">
        <text>cytidine(4) in tRNA(Pro) + S-adenosyl-L-methionine = 2'-O-methylcytidine(4) in tRNA(Pro) + S-adenosyl-L-homocysteine + H(+)</text>
        <dbReference type="Rhea" id="RHEA:32767"/>
        <dbReference type="Rhea" id="RHEA-COMP:10397"/>
        <dbReference type="Rhea" id="RHEA-COMP:10398"/>
        <dbReference type="ChEBI" id="CHEBI:15378"/>
        <dbReference type="ChEBI" id="CHEBI:57856"/>
        <dbReference type="ChEBI" id="CHEBI:59789"/>
        <dbReference type="ChEBI" id="CHEBI:74495"/>
        <dbReference type="ChEBI" id="CHEBI:82748"/>
        <dbReference type="EC" id="2.1.1.225"/>
    </reaction>
</comment>
<comment type="catalytic activity">
    <reaction evidence="1">
        <text>cytidine(4) in tRNA(Gly)(GCC) + S-adenosyl-L-methionine = 2'-O-methylcytidine(4) in tRNA(Gly)(GCC) + S-adenosyl-L-homocysteine + H(+)</text>
        <dbReference type="Rhea" id="RHEA:43192"/>
        <dbReference type="Rhea" id="RHEA-COMP:10399"/>
        <dbReference type="Rhea" id="RHEA-COMP:10400"/>
        <dbReference type="ChEBI" id="CHEBI:15378"/>
        <dbReference type="ChEBI" id="CHEBI:57856"/>
        <dbReference type="ChEBI" id="CHEBI:59789"/>
        <dbReference type="ChEBI" id="CHEBI:74495"/>
        <dbReference type="ChEBI" id="CHEBI:82748"/>
        <dbReference type="EC" id="2.1.1.225"/>
    </reaction>
</comment>
<comment type="catalytic activity">
    <reaction evidence="1">
        <text>adenosine(4) in tRNA(His) + S-adenosyl-L-methionine = 2'-O-methyladenosine(4) in tRNA(His) + S-adenosyl-L-homocysteine + H(+)</text>
        <dbReference type="Rhea" id="RHEA:43196"/>
        <dbReference type="Rhea" id="RHEA-COMP:10401"/>
        <dbReference type="Rhea" id="RHEA-COMP:10402"/>
        <dbReference type="ChEBI" id="CHEBI:15378"/>
        <dbReference type="ChEBI" id="CHEBI:57856"/>
        <dbReference type="ChEBI" id="CHEBI:59789"/>
        <dbReference type="ChEBI" id="CHEBI:74411"/>
        <dbReference type="ChEBI" id="CHEBI:74477"/>
        <dbReference type="EC" id="2.1.1.225"/>
    </reaction>
</comment>
<comment type="alternative products">
    <event type="alternative splicing"/>
    <isoform>
        <id>Q9NUP7-1</id>
        <name>1</name>
        <sequence type="displayed"/>
    </isoform>
    <isoform>
        <id>Q9NUP7-2</id>
        <name>2</name>
        <sequence type="described" ref="VSP_018578 VSP_018579"/>
    </isoform>
</comment>
<comment type="similarity">
    <text evidence="6">Belongs to the methyltransferase TRM13 family.</text>
</comment>
<organism>
    <name type="scientific">Homo sapiens</name>
    <name type="common">Human</name>
    <dbReference type="NCBI Taxonomy" id="9606"/>
    <lineage>
        <taxon>Eukaryota</taxon>
        <taxon>Metazoa</taxon>
        <taxon>Chordata</taxon>
        <taxon>Craniata</taxon>
        <taxon>Vertebrata</taxon>
        <taxon>Euteleostomi</taxon>
        <taxon>Mammalia</taxon>
        <taxon>Eutheria</taxon>
        <taxon>Euarchontoglires</taxon>
        <taxon>Primates</taxon>
        <taxon>Haplorrhini</taxon>
        <taxon>Catarrhini</taxon>
        <taxon>Hominidae</taxon>
        <taxon>Homo</taxon>
    </lineage>
</organism>
<evidence type="ECO:0000250" key="1">
    <source>
        <dbReference type="UniProtKB" id="Q12383"/>
    </source>
</evidence>
<evidence type="ECO:0000255" key="2"/>
<evidence type="ECO:0000255" key="3">
    <source>
        <dbReference type="PROSITE-ProRule" id="PRU01141"/>
    </source>
</evidence>
<evidence type="ECO:0000256" key="4">
    <source>
        <dbReference type="SAM" id="MobiDB-lite"/>
    </source>
</evidence>
<evidence type="ECO:0000303" key="5">
    <source>
    </source>
</evidence>
<evidence type="ECO:0000305" key="6"/>
<evidence type="ECO:0007744" key="7">
    <source>
    </source>
</evidence>
<evidence type="ECO:0007744" key="8">
    <source>
    </source>
</evidence>
<evidence type="ECO:0007744" key="9">
    <source>
    </source>
</evidence>
<dbReference type="EC" id="2.1.1.225"/>
<dbReference type="EMBL" id="AK001149">
    <property type="protein sequence ID" value="BAA91520.1"/>
    <property type="molecule type" value="mRNA"/>
</dbReference>
<dbReference type="EMBL" id="AK002081">
    <property type="protein sequence ID" value="BAA92074.1"/>
    <property type="molecule type" value="mRNA"/>
</dbReference>
<dbReference type="EMBL" id="AL445928">
    <property type="status" value="NOT_ANNOTATED_CDS"/>
    <property type="molecule type" value="Genomic_DNA"/>
</dbReference>
<dbReference type="EMBL" id="BC075811">
    <property type="protein sequence ID" value="AAH75811.1"/>
    <property type="molecule type" value="mRNA"/>
</dbReference>
<dbReference type="CCDS" id="CCDS765.1">
    <molecule id="Q9NUP7-1"/>
</dbReference>
<dbReference type="RefSeq" id="NP_061956.2">
    <molecule id="Q9NUP7-1"/>
    <property type="nucleotide sequence ID" value="NM_019083.3"/>
</dbReference>
<dbReference type="BioGRID" id="119985">
    <property type="interactions" value="12"/>
</dbReference>
<dbReference type="FunCoup" id="Q9NUP7">
    <property type="interactions" value="2142"/>
</dbReference>
<dbReference type="IntAct" id="Q9NUP7">
    <property type="interactions" value="7"/>
</dbReference>
<dbReference type="STRING" id="9606.ENSP00000359160"/>
<dbReference type="GlyGen" id="Q9NUP7">
    <property type="glycosylation" value="1 site, 1 N-linked glycan (1 site)"/>
</dbReference>
<dbReference type="iPTMnet" id="Q9NUP7"/>
<dbReference type="PhosphoSitePlus" id="Q9NUP7"/>
<dbReference type="BioMuta" id="TRMT13"/>
<dbReference type="DMDM" id="108885172"/>
<dbReference type="jPOST" id="Q9NUP7"/>
<dbReference type="MassIVE" id="Q9NUP7"/>
<dbReference type="PaxDb" id="9606-ENSP00000359160"/>
<dbReference type="PeptideAtlas" id="Q9NUP7"/>
<dbReference type="ProteomicsDB" id="82703">
    <molecule id="Q9NUP7-1"/>
</dbReference>
<dbReference type="ProteomicsDB" id="82704">
    <molecule id="Q9NUP7-2"/>
</dbReference>
<dbReference type="Pumba" id="Q9NUP7"/>
<dbReference type="Antibodypedia" id="33692">
    <property type="antibodies" value="41 antibodies from 14 providers"/>
</dbReference>
<dbReference type="DNASU" id="54482"/>
<dbReference type="Ensembl" id="ENST00000370141.8">
    <molecule id="Q9NUP7-1"/>
    <property type="protein sequence ID" value="ENSP00000359160.2"/>
    <property type="gene ID" value="ENSG00000122435.11"/>
</dbReference>
<dbReference type="Ensembl" id="ENST00000482437.5">
    <molecule id="Q9NUP7-2"/>
    <property type="protein sequence ID" value="ENSP00000432616.1"/>
    <property type="gene ID" value="ENSG00000122435.11"/>
</dbReference>
<dbReference type="GeneID" id="54482"/>
<dbReference type="KEGG" id="hsa:54482"/>
<dbReference type="MANE-Select" id="ENST00000370141.8">
    <property type="protein sequence ID" value="ENSP00000359160.2"/>
    <property type="RefSeq nucleotide sequence ID" value="NM_019083.3"/>
    <property type="RefSeq protein sequence ID" value="NP_061956.2"/>
</dbReference>
<dbReference type="UCSC" id="uc001dsv.4">
    <molecule id="Q9NUP7-1"/>
    <property type="organism name" value="human"/>
</dbReference>
<dbReference type="AGR" id="HGNC:25502"/>
<dbReference type="CTD" id="54482"/>
<dbReference type="GeneCards" id="TRMT13"/>
<dbReference type="HGNC" id="HGNC:25502">
    <property type="gene designation" value="TRMT13"/>
</dbReference>
<dbReference type="HPA" id="ENSG00000122435">
    <property type="expression patterns" value="Low tissue specificity"/>
</dbReference>
<dbReference type="neXtProt" id="NX_Q9NUP7"/>
<dbReference type="OpenTargets" id="ENSG00000122435"/>
<dbReference type="PharmGKB" id="PA143485428"/>
<dbReference type="VEuPathDB" id="HostDB:ENSG00000122435"/>
<dbReference type="eggNOG" id="KOG2811">
    <property type="taxonomic scope" value="Eukaryota"/>
</dbReference>
<dbReference type="GeneTree" id="ENSGT00390000003182"/>
<dbReference type="HOGENOM" id="CLU_027610_1_0_1"/>
<dbReference type="InParanoid" id="Q9NUP7"/>
<dbReference type="OMA" id="HRCSWRS"/>
<dbReference type="OrthoDB" id="258806at2759"/>
<dbReference type="PAN-GO" id="Q9NUP7">
    <property type="GO annotations" value="2 GO annotations based on evolutionary models"/>
</dbReference>
<dbReference type="PhylomeDB" id="Q9NUP7"/>
<dbReference type="TreeFam" id="TF317538"/>
<dbReference type="PathwayCommons" id="Q9NUP7"/>
<dbReference type="Reactome" id="R-HSA-6782315">
    <property type="pathway name" value="tRNA modification in the nucleus and cytosol"/>
</dbReference>
<dbReference type="SignaLink" id="Q9NUP7"/>
<dbReference type="BioGRID-ORCS" id="54482">
    <property type="hits" value="12 hits in 1141 CRISPR screens"/>
</dbReference>
<dbReference type="ChiTaRS" id="TRMT13">
    <property type="organism name" value="human"/>
</dbReference>
<dbReference type="GenomeRNAi" id="54482"/>
<dbReference type="Pharos" id="Q9NUP7">
    <property type="development level" value="Tdark"/>
</dbReference>
<dbReference type="PRO" id="PR:Q9NUP7"/>
<dbReference type="Proteomes" id="UP000005640">
    <property type="component" value="Chromosome 1"/>
</dbReference>
<dbReference type="RNAct" id="Q9NUP7">
    <property type="molecule type" value="protein"/>
</dbReference>
<dbReference type="Bgee" id="ENSG00000122435">
    <property type="expression patterns" value="Expressed in secondary oocyte and 189 other cell types or tissues"/>
</dbReference>
<dbReference type="ExpressionAtlas" id="Q9NUP7">
    <property type="expression patterns" value="baseline and differential"/>
</dbReference>
<dbReference type="GO" id="GO:0106050">
    <property type="term" value="F:tRNA 2'-O-methyltransferase activity"/>
    <property type="evidence" value="ECO:0007669"/>
    <property type="project" value="InterPro"/>
</dbReference>
<dbReference type="GO" id="GO:0008175">
    <property type="term" value="F:tRNA methyltransferase activity"/>
    <property type="evidence" value="ECO:0000318"/>
    <property type="project" value="GO_Central"/>
</dbReference>
<dbReference type="GO" id="GO:0008270">
    <property type="term" value="F:zinc ion binding"/>
    <property type="evidence" value="ECO:0007669"/>
    <property type="project" value="UniProtKB-KW"/>
</dbReference>
<dbReference type="GO" id="GO:0030488">
    <property type="term" value="P:tRNA methylation"/>
    <property type="evidence" value="ECO:0000318"/>
    <property type="project" value="GO_Central"/>
</dbReference>
<dbReference type="InterPro" id="IPR007871">
    <property type="entry name" value="Methyltransferase_TRM13"/>
</dbReference>
<dbReference type="InterPro" id="IPR039044">
    <property type="entry name" value="Trm13"/>
</dbReference>
<dbReference type="InterPro" id="IPR022776">
    <property type="entry name" value="TRM13/UPF0224_CHHC_Znf_dom"/>
</dbReference>
<dbReference type="InterPro" id="IPR021721">
    <property type="entry name" value="Znf_CCCH-type_TRM13"/>
</dbReference>
<dbReference type="PANTHER" id="PTHR12998">
    <property type="entry name" value="TRNA:M(4)X MODIFICATION ENZYME TRM13 HOMOLOG"/>
    <property type="match status" value="1"/>
</dbReference>
<dbReference type="PANTHER" id="PTHR12998:SF0">
    <property type="entry name" value="TRNA:M(4)X MODIFICATION ENZYME TRM13 HOMOLOG"/>
    <property type="match status" value="1"/>
</dbReference>
<dbReference type="Pfam" id="PF05206">
    <property type="entry name" value="TRM13"/>
    <property type="match status" value="1"/>
</dbReference>
<dbReference type="Pfam" id="PF11722">
    <property type="entry name" value="zf-TRM13_CCCH"/>
    <property type="match status" value="1"/>
</dbReference>
<dbReference type="Pfam" id="PF05253">
    <property type="entry name" value="zf-U11-48K"/>
    <property type="match status" value="1"/>
</dbReference>
<dbReference type="PROSITE" id="PS51800">
    <property type="entry name" value="ZF_CHHC_U11_48K"/>
    <property type="match status" value="1"/>
</dbReference>
<sequence>MATSATSPHAPGFPAEGRCGYYVEKKKRFCRMVVAAGKRFCGEHAGAAEEEDARKRILCPLDPKHTVYEDQLAKHLKKCNSREKPKPDFYIQDINAGLRDETEIPEQLVPISSLSEEQLEKLIKKLRKASEGLNSTLKDHIMSHPALHDALNDPKNGDSATKHLKQQASILGNIENLKLLGPRRCFVEFGAGKGKLSHWVDIALKDAEKVHFILVEKVTTRFKVDGKHRKKNSVFERLQIDIQHLCLNKIPVLREEKLPVVGIGKHLCGMATDLALRCLVETYAASFEERNEEPLAKRIKNDKTEKEIYTLAKEGNEKNVPEKWNPVAGIVIALCCHHRCDWRHYVGKEYFRALGLGAVEFHYFQRMSSWATCGMRKTSLETSNSTTKRQDNQNDDSEEHDDGGYRITDDGADCLPGLLSVEEKKKIGHLCKLLIDQGRIQYLQQKGFSPALQYYTDPLVSLENVLLTALPNHSSSPETTA</sequence>
<keyword id="KW-0007">Acetylation</keyword>
<keyword id="KW-0025">Alternative splicing</keyword>
<keyword id="KW-0175">Coiled coil</keyword>
<keyword id="KW-0479">Metal-binding</keyword>
<keyword id="KW-0489">Methyltransferase</keyword>
<keyword id="KW-1267">Proteomics identification</keyword>
<keyword id="KW-1185">Reference proteome</keyword>
<keyword id="KW-0949">S-adenosyl-L-methionine</keyword>
<keyword id="KW-0808">Transferase</keyword>
<keyword id="KW-0819">tRNA processing</keyword>
<keyword id="KW-0862">Zinc</keyword>
<keyword id="KW-0863">Zinc-finger</keyword>
<proteinExistence type="evidence at protein level"/>
<protein>
    <recommendedName>
        <fullName>tRNA:m(4)X modification enzyme TRM13 homolog</fullName>
        <ecNumber>2.1.1.225</ecNumber>
    </recommendedName>
    <alternativeName>
        <fullName>Coiled-coil domain-containing protein 76</fullName>
    </alternativeName>
</protein>
<reference key="1">
    <citation type="journal article" date="2004" name="Nat. Genet.">
        <title>Complete sequencing and characterization of 21,243 full-length human cDNAs.</title>
        <authorList>
            <person name="Ota T."/>
            <person name="Suzuki Y."/>
            <person name="Nishikawa T."/>
            <person name="Otsuki T."/>
            <person name="Sugiyama T."/>
            <person name="Irie R."/>
            <person name="Wakamatsu A."/>
            <person name="Hayashi K."/>
            <person name="Sato H."/>
            <person name="Nagai K."/>
            <person name="Kimura K."/>
            <person name="Makita H."/>
            <person name="Sekine M."/>
            <person name="Obayashi M."/>
            <person name="Nishi T."/>
            <person name="Shibahara T."/>
            <person name="Tanaka T."/>
            <person name="Ishii S."/>
            <person name="Yamamoto J."/>
            <person name="Saito K."/>
            <person name="Kawai Y."/>
            <person name="Isono Y."/>
            <person name="Nakamura Y."/>
            <person name="Nagahari K."/>
            <person name="Murakami K."/>
            <person name="Yasuda T."/>
            <person name="Iwayanagi T."/>
            <person name="Wagatsuma M."/>
            <person name="Shiratori A."/>
            <person name="Sudo H."/>
            <person name="Hosoiri T."/>
            <person name="Kaku Y."/>
            <person name="Kodaira H."/>
            <person name="Kondo H."/>
            <person name="Sugawara M."/>
            <person name="Takahashi M."/>
            <person name="Kanda K."/>
            <person name="Yokoi T."/>
            <person name="Furuya T."/>
            <person name="Kikkawa E."/>
            <person name="Omura Y."/>
            <person name="Abe K."/>
            <person name="Kamihara K."/>
            <person name="Katsuta N."/>
            <person name="Sato K."/>
            <person name="Tanikawa M."/>
            <person name="Yamazaki M."/>
            <person name="Ninomiya K."/>
            <person name="Ishibashi T."/>
            <person name="Yamashita H."/>
            <person name="Murakawa K."/>
            <person name="Fujimori K."/>
            <person name="Tanai H."/>
            <person name="Kimata M."/>
            <person name="Watanabe M."/>
            <person name="Hiraoka S."/>
            <person name="Chiba Y."/>
            <person name="Ishida S."/>
            <person name="Ono Y."/>
            <person name="Takiguchi S."/>
            <person name="Watanabe S."/>
            <person name="Yosida M."/>
            <person name="Hotuta T."/>
            <person name="Kusano J."/>
            <person name="Kanehori K."/>
            <person name="Takahashi-Fujii A."/>
            <person name="Hara H."/>
            <person name="Tanase T.-O."/>
            <person name="Nomura Y."/>
            <person name="Togiya S."/>
            <person name="Komai F."/>
            <person name="Hara R."/>
            <person name="Takeuchi K."/>
            <person name="Arita M."/>
            <person name="Imose N."/>
            <person name="Musashino K."/>
            <person name="Yuuki H."/>
            <person name="Oshima A."/>
            <person name="Sasaki N."/>
            <person name="Aotsuka S."/>
            <person name="Yoshikawa Y."/>
            <person name="Matsunawa H."/>
            <person name="Ichihara T."/>
            <person name="Shiohata N."/>
            <person name="Sano S."/>
            <person name="Moriya S."/>
            <person name="Momiyama H."/>
            <person name="Satoh N."/>
            <person name="Takami S."/>
            <person name="Terashima Y."/>
            <person name="Suzuki O."/>
            <person name="Nakagawa S."/>
            <person name="Senoh A."/>
            <person name="Mizoguchi H."/>
            <person name="Goto Y."/>
            <person name="Shimizu F."/>
            <person name="Wakebe H."/>
            <person name="Hishigaki H."/>
            <person name="Watanabe T."/>
            <person name="Sugiyama A."/>
            <person name="Takemoto M."/>
            <person name="Kawakami B."/>
            <person name="Yamazaki M."/>
            <person name="Watanabe K."/>
            <person name="Kumagai A."/>
            <person name="Itakura S."/>
            <person name="Fukuzumi Y."/>
            <person name="Fujimori Y."/>
            <person name="Komiyama M."/>
            <person name="Tashiro H."/>
            <person name="Tanigami A."/>
            <person name="Fujiwara T."/>
            <person name="Ono T."/>
            <person name="Yamada K."/>
            <person name="Fujii Y."/>
            <person name="Ozaki K."/>
            <person name="Hirao M."/>
            <person name="Ohmori Y."/>
            <person name="Kawabata A."/>
            <person name="Hikiji T."/>
            <person name="Kobatake N."/>
            <person name="Inagaki H."/>
            <person name="Ikema Y."/>
            <person name="Okamoto S."/>
            <person name="Okitani R."/>
            <person name="Kawakami T."/>
            <person name="Noguchi S."/>
            <person name="Itoh T."/>
            <person name="Shigeta K."/>
            <person name="Senba T."/>
            <person name="Matsumura K."/>
            <person name="Nakajima Y."/>
            <person name="Mizuno T."/>
            <person name="Morinaga M."/>
            <person name="Sasaki M."/>
            <person name="Togashi T."/>
            <person name="Oyama M."/>
            <person name="Hata H."/>
            <person name="Watanabe M."/>
            <person name="Komatsu T."/>
            <person name="Mizushima-Sugano J."/>
            <person name="Satoh T."/>
            <person name="Shirai Y."/>
            <person name="Takahashi Y."/>
            <person name="Nakagawa K."/>
            <person name="Okumura K."/>
            <person name="Nagase T."/>
            <person name="Nomura N."/>
            <person name="Kikuchi H."/>
            <person name="Masuho Y."/>
            <person name="Yamashita R."/>
            <person name="Nakai K."/>
            <person name="Yada T."/>
            <person name="Nakamura Y."/>
            <person name="Ohara O."/>
            <person name="Isogai T."/>
            <person name="Sugano S."/>
        </authorList>
    </citation>
    <scope>NUCLEOTIDE SEQUENCE [LARGE SCALE MRNA] (ISOFORMS 1 AND 2)</scope>
    <source>
        <tissue>Embryo</tissue>
        <tissue>Placenta</tissue>
    </source>
</reference>
<reference key="2">
    <citation type="journal article" date="2006" name="Nature">
        <title>The DNA sequence and biological annotation of human chromosome 1.</title>
        <authorList>
            <person name="Gregory S.G."/>
            <person name="Barlow K.F."/>
            <person name="McLay K.E."/>
            <person name="Kaul R."/>
            <person name="Swarbreck D."/>
            <person name="Dunham A."/>
            <person name="Scott C.E."/>
            <person name="Howe K.L."/>
            <person name="Woodfine K."/>
            <person name="Spencer C.C.A."/>
            <person name="Jones M.C."/>
            <person name="Gillson C."/>
            <person name="Searle S."/>
            <person name="Zhou Y."/>
            <person name="Kokocinski F."/>
            <person name="McDonald L."/>
            <person name="Evans R."/>
            <person name="Phillips K."/>
            <person name="Atkinson A."/>
            <person name="Cooper R."/>
            <person name="Jones C."/>
            <person name="Hall R.E."/>
            <person name="Andrews T.D."/>
            <person name="Lloyd C."/>
            <person name="Ainscough R."/>
            <person name="Almeida J.P."/>
            <person name="Ambrose K.D."/>
            <person name="Anderson F."/>
            <person name="Andrew R.W."/>
            <person name="Ashwell R.I.S."/>
            <person name="Aubin K."/>
            <person name="Babbage A.K."/>
            <person name="Bagguley C.L."/>
            <person name="Bailey J."/>
            <person name="Beasley H."/>
            <person name="Bethel G."/>
            <person name="Bird C.P."/>
            <person name="Bray-Allen S."/>
            <person name="Brown J.Y."/>
            <person name="Brown A.J."/>
            <person name="Buckley D."/>
            <person name="Burton J."/>
            <person name="Bye J."/>
            <person name="Carder C."/>
            <person name="Chapman J.C."/>
            <person name="Clark S.Y."/>
            <person name="Clarke G."/>
            <person name="Clee C."/>
            <person name="Cobley V."/>
            <person name="Collier R.E."/>
            <person name="Corby N."/>
            <person name="Coville G.J."/>
            <person name="Davies J."/>
            <person name="Deadman R."/>
            <person name="Dunn M."/>
            <person name="Earthrowl M."/>
            <person name="Ellington A.G."/>
            <person name="Errington H."/>
            <person name="Frankish A."/>
            <person name="Frankland J."/>
            <person name="French L."/>
            <person name="Garner P."/>
            <person name="Garnett J."/>
            <person name="Gay L."/>
            <person name="Ghori M.R.J."/>
            <person name="Gibson R."/>
            <person name="Gilby L.M."/>
            <person name="Gillett W."/>
            <person name="Glithero R.J."/>
            <person name="Grafham D.V."/>
            <person name="Griffiths C."/>
            <person name="Griffiths-Jones S."/>
            <person name="Grocock R."/>
            <person name="Hammond S."/>
            <person name="Harrison E.S.I."/>
            <person name="Hart E."/>
            <person name="Haugen E."/>
            <person name="Heath P.D."/>
            <person name="Holmes S."/>
            <person name="Holt K."/>
            <person name="Howden P.J."/>
            <person name="Hunt A.R."/>
            <person name="Hunt S.E."/>
            <person name="Hunter G."/>
            <person name="Isherwood J."/>
            <person name="James R."/>
            <person name="Johnson C."/>
            <person name="Johnson D."/>
            <person name="Joy A."/>
            <person name="Kay M."/>
            <person name="Kershaw J.K."/>
            <person name="Kibukawa M."/>
            <person name="Kimberley A.M."/>
            <person name="King A."/>
            <person name="Knights A.J."/>
            <person name="Lad H."/>
            <person name="Laird G."/>
            <person name="Lawlor S."/>
            <person name="Leongamornlert D.A."/>
            <person name="Lloyd D.M."/>
            <person name="Loveland J."/>
            <person name="Lovell J."/>
            <person name="Lush M.J."/>
            <person name="Lyne R."/>
            <person name="Martin S."/>
            <person name="Mashreghi-Mohammadi M."/>
            <person name="Matthews L."/>
            <person name="Matthews N.S.W."/>
            <person name="McLaren S."/>
            <person name="Milne S."/>
            <person name="Mistry S."/>
            <person name="Moore M.J.F."/>
            <person name="Nickerson T."/>
            <person name="O'Dell C.N."/>
            <person name="Oliver K."/>
            <person name="Palmeiri A."/>
            <person name="Palmer S.A."/>
            <person name="Parker A."/>
            <person name="Patel D."/>
            <person name="Pearce A.V."/>
            <person name="Peck A.I."/>
            <person name="Pelan S."/>
            <person name="Phelps K."/>
            <person name="Phillimore B.J."/>
            <person name="Plumb R."/>
            <person name="Rajan J."/>
            <person name="Raymond C."/>
            <person name="Rouse G."/>
            <person name="Saenphimmachak C."/>
            <person name="Sehra H.K."/>
            <person name="Sheridan E."/>
            <person name="Shownkeen R."/>
            <person name="Sims S."/>
            <person name="Skuce C.D."/>
            <person name="Smith M."/>
            <person name="Steward C."/>
            <person name="Subramanian S."/>
            <person name="Sycamore N."/>
            <person name="Tracey A."/>
            <person name="Tromans A."/>
            <person name="Van Helmond Z."/>
            <person name="Wall M."/>
            <person name="Wallis J.M."/>
            <person name="White S."/>
            <person name="Whitehead S.L."/>
            <person name="Wilkinson J.E."/>
            <person name="Willey D.L."/>
            <person name="Williams H."/>
            <person name="Wilming L."/>
            <person name="Wray P.W."/>
            <person name="Wu Z."/>
            <person name="Coulson A."/>
            <person name="Vaudin M."/>
            <person name="Sulston J.E."/>
            <person name="Durbin R.M."/>
            <person name="Hubbard T."/>
            <person name="Wooster R."/>
            <person name="Dunham I."/>
            <person name="Carter N.P."/>
            <person name="McVean G."/>
            <person name="Ross M.T."/>
            <person name="Harrow J."/>
            <person name="Olson M.V."/>
            <person name="Beck S."/>
            <person name="Rogers J."/>
            <person name="Bentley D.R."/>
        </authorList>
    </citation>
    <scope>NUCLEOTIDE SEQUENCE [LARGE SCALE GENOMIC DNA]</scope>
</reference>
<reference key="3">
    <citation type="journal article" date="2004" name="Genome Res.">
        <title>The status, quality, and expansion of the NIH full-length cDNA project: the Mammalian Gene Collection (MGC).</title>
        <authorList>
            <consortium name="The MGC Project Team"/>
        </authorList>
    </citation>
    <scope>NUCLEOTIDE SEQUENCE [LARGE SCALE MRNA] (ISOFORM 1)</scope>
    <source>
        <tissue>Cervix</tissue>
    </source>
</reference>
<reference key="4">
    <citation type="journal article" date="2008" name="Bioinformatics">
        <title>A novel CHHC Zn-finger domain found in spliceosomal proteins and tRNA modifying enzymes.</title>
        <authorList>
            <person name="Andreeva A."/>
            <person name="Tidow H."/>
        </authorList>
    </citation>
    <scope>DOMAIN CHHC ZINC-FINGER</scope>
</reference>
<reference key="5">
    <citation type="journal article" date="2009" name="Anal. Chem.">
        <title>Lys-N and trypsin cover complementary parts of the phosphoproteome in a refined SCX-based approach.</title>
        <authorList>
            <person name="Gauci S."/>
            <person name="Helbig A.O."/>
            <person name="Slijper M."/>
            <person name="Krijgsveld J."/>
            <person name="Heck A.J."/>
            <person name="Mohammed S."/>
        </authorList>
    </citation>
    <scope>ACETYLATION [LARGE SCALE ANALYSIS] AT ALA-2</scope>
    <scope>CLEAVAGE OF INITIATOR METHIONINE [LARGE SCALE ANALYSIS]</scope>
    <scope>IDENTIFICATION BY MASS SPECTROMETRY [LARGE SCALE ANALYSIS]</scope>
</reference>
<reference key="6">
    <citation type="journal article" date="2010" name="Sci. Signal.">
        <title>Quantitative phosphoproteomics reveals widespread full phosphorylation site occupancy during mitosis.</title>
        <authorList>
            <person name="Olsen J.V."/>
            <person name="Vermeulen M."/>
            <person name="Santamaria A."/>
            <person name="Kumar C."/>
            <person name="Miller M.L."/>
            <person name="Jensen L.J."/>
            <person name="Gnad F."/>
            <person name="Cox J."/>
            <person name="Jensen T.S."/>
            <person name="Nigg E.A."/>
            <person name="Brunak S."/>
            <person name="Mann M."/>
        </authorList>
    </citation>
    <scope>ACETYLATION [LARGE SCALE ANALYSIS] AT ALA-2</scope>
    <scope>CLEAVAGE OF INITIATOR METHIONINE [LARGE SCALE ANALYSIS]</scope>
    <scope>IDENTIFICATION BY MASS SPECTROMETRY [LARGE SCALE ANALYSIS]</scope>
    <source>
        <tissue>Cervix carcinoma</tissue>
    </source>
</reference>
<reference key="7">
    <citation type="journal article" date="2012" name="Mol. Cell. Proteomics">
        <title>Comparative large-scale characterisation of plant vs. mammal proteins reveals similar and idiosyncratic N-alpha acetylation features.</title>
        <authorList>
            <person name="Bienvenut W.V."/>
            <person name="Sumpton D."/>
            <person name="Martinez A."/>
            <person name="Lilla S."/>
            <person name="Espagne C."/>
            <person name="Meinnel T."/>
            <person name="Giglione C."/>
        </authorList>
    </citation>
    <scope>ACETYLATION [LARGE SCALE ANALYSIS] AT ALA-2</scope>
    <scope>CLEAVAGE OF INITIATOR METHIONINE [LARGE SCALE ANALYSIS]</scope>
    <scope>IDENTIFICATION BY MASS SPECTROMETRY [LARGE SCALE ANALYSIS]</scope>
</reference>
<reference key="8">
    <citation type="journal article" date="2013" name="J. Proteome Res.">
        <title>Toward a comprehensive characterization of a human cancer cell phosphoproteome.</title>
        <authorList>
            <person name="Zhou H."/>
            <person name="Di Palma S."/>
            <person name="Preisinger C."/>
            <person name="Peng M."/>
            <person name="Polat A.N."/>
            <person name="Heck A.J."/>
            <person name="Mohammed S."/>
        </authorList>
    </citation>
    <scope>IDENTIFICATION BY MASS SPECTROMETRY [LARGE SCALE ANALYSIS]</scope>
    <source>
        <tissue>Cervix carcinoma</tissue>
        <tissue>Erythroleukemia</tissue>
    </source>
</reference>